<protein>
    <recommendedName>
        <fullName>Anthranilate synthase component 1</fullName>
        <shortName>AS</shortName>
        <shortName>ASI</shortName>
        <ecNumber>4.1.3.27</ecNumber>
    </recommendedName>
</protein>
<evidence type="ECO:0000250" key="1"/>
<evidence type="ECO:0000250" key="2">
    <source>
        <dbReference type="UniProtKB" id="P00897"/>
    </source>
</evidence>
<evidence type="ECO:0000269" key="3">
    <source>
    </source>
</evidence>
<evidence type="ECO:0000269" key="4">
    <source>
    </source>
</evidence>
<evidence type="ECO:0000269" key="5">
    <source>
    </source>
</evidence>
<evidence type="ECO:0000303" key="6">
    <source>
    </source>
</evidence>
<evidence type="ECO:0000305" key="7"/>
<evidence type="ECO:0000305" key="8">
    <source>
    </source>
</evidence>
<name>TRPE_PSEAE</name>
<keyword id="KW-0028">Amino-acid biosynthesis</keyword>
<keyword id="KW-0057">Aromatic amino acid biosynthesis</keyword>
<keyword id="KW-0456">Lyase</keyword>
<keyword id="KW-0460">Magnesium</keyword>
<keyword id="KW-0479">Metal-binding</keyword>
<keyword id="KW-1185">Reference proteome</keyword>
<keyword id="KW-0822">Tryptophan biosynthesis</keyword>
<accession>P20580</accession>
<sequence>MNREEFLRLAADGYNRIPLSFETLADFDTPLSIYLKLADAPNSYLLESVQGGEKWGRYSIIGLPCRTVLRVYDHQVRISIDGVETERFDCADPLAFVEEFKARYQVPTVPGLPRFDGGLVGYFGYDCVRYVEKRLATCPNPDPLGNPDILLMVSDAVVVFDNLAGKIHAIVLADPSEENAYERGQARLEELLERLRQPITPRRGLDLEAAQGREPAFRASFTREDYENAVGRIKDYILAGDCMQVVPSQRMSIEFKAAPIDLYRALRCFNPTPYMYFFNFGDFHVVGSSPEVLVRVEDGLVTVRPIAGTRPRGINEEADLALEQDLLSDAKEIAEHLMLIDLGRNDVGRVSDIGAVKVTEKMVIERYSNVMHIVSNVTGQLREGLSAMDALRAILPAGTLSGAPKIRAMEIIDELEPVKRGVYGGAVGYLAWNGNMDTAIAIRTAVIKNGELHVQAGGGIVADSVPALEWEETINKRRAMFRAVALAEQSVE</sequence>
<proteinExistence type="evidence at protein level"/>
<organism>
    <name type="scientific">Pseudomonas aeruginosa (strain ATCC 15692 / DSM 22644 / CIP 104116 / JCM 14847 / LMG 12228 / 1C / PRS 101 / PAO1)</name>
    <dbReference type="NCBI Taxonomy" id="208964"/>
    <lineage>
        <taxon>Bacteria</taxon>
        <taxon>Pseudomonadati</taxon>
        <taxon>Pseudomonadota</taxon>
        <taxon>Gammaproteobacteria</taxon>
        <taxon>Pseudomonadales</taxon>
        <taxon>Pseudomonadaceae</taxon>
        <taxon>Pseudomonas</taxon>
    </lineage>
</organism>
<reference key="1">
    <citation type="journal article" date="1990" name="J. Bacteriol.">
        <title>DNA sequences and characterization of four early genes of the tryptophan pathway in Pseudomonas aeruginosa.</title>
        <authorList>
            <person name="Essar D.W."/>
            <person name="Eberly L."/>
            <person name="Han C.Y."/>
            <person name="Crawford I.P."/>
        </authorList>
    </citation>
    <scope>NUCLEOTIDE SEQUENCE [GENOMIC DNA]</scope>
    <scope>FUNCTION</scope>
    <scope>PATHWAY</scope>
    <scope>DISRUPTION PHENOTYPE</scope>
</reference>
<reference key="2">
    <citation type="submission" date="1999-08" db="EMBL/GenBank/DDBJ databases">
        <title>Genetic relationship between bacteriocins and bacteriophages.</title>
        <authorList>
            <person name="Nakayama K."/>
            <person name="Takashima K."/>
            <person name="Ishihara H."/>
            <person name="Shinomiya T."/>
            <person name="Kageyama M."/>
            <person name="Kanaya S."/>
            <person name="Ohnishi M."/>
            <person name="Murata T."/>
            <person name="Terawaki Y."/>
            <person name="Mori H."/>
            <person name="Hayashi T."/>
        </authorList>
    </citation>
    <scope>NUCLEOTIDE SEQUENCE [GENOMIC DNA]</scope>
    <source>
        <strain>ATCC 15692 / DSM 22644 / CIP 104116 / JCM 14847 / LMG 12228 / 1C / PRS 101 / PAO1</strain>
    </source>
</reference>
<reference key="3">
    <citation type="journal article" date="2000" name="Nature">
        <title>Complete genome sequence of Pseudomonas aeruginosa PAO1, an opportunistic pathogen.</title>
        <authorList>
            <person name="Stover C.K."/>
            <person name="Pham X.-Q.T."/>
            <person name="Erwin A.L."/>
            <person name="Mizoguchi S.D."/>
            <person name="Warrener P."/>
            <person name="Hickey M.J."/>
            <person name="Brinkman F.S.L."/>
            <person name="Hufnagle W.O."/>
            <person name="Kowalik D.J."/>
            <person name="Lagrou M."/>
            <person name="Garber R.L."/>
            <person name="Goltry L."/>
            <person name="Tolentino E."/>
            <person name="Westbrock-Wadman S."/>
            <person name="Yuan Y."/>
            <person name="Brody L.L."/>
            <person name="Coulter S.N."/>
            <person name="Folger K.R."/>
            <person name="Kas A."/>
            <person name="Larbig K."/>
            <person name="Lim R.M."/>
            <person name="Smith K.A."/>
            <person name="Spencer D.H."/>
            <person name="Wong G.K.-S."/>
            <person name="Wu Z."/>
            <person name="Paulsen I.T."/>
            <person name="Reizer J."/>
            <person name="Saier M.H. Jr."/>
            <person name="Hancock R.E.W."/>
            <person name="Lory S."/>
            <person name="Olson M.V."/>
        </authorList>
    </citation>
    <scope>NUCLEOTIDE SEQUENCE [LARGE SCALE GENOMIC DNA]</scope>
    <source>
        <strain>ATCC 15692 / DSM 22644 / CIP 104116 / JCM 14847 / LMG 12228 / 1C / PRS 101 / PAO1</strain>
    </source>
</reference>
<reference key="4">
    <citation type="journal article" date="1993" name="J. Bacteriol.">
        <title>Regulation of pyocin genes in Pseudomonas aeruginosa by positive (prtN) and negative (prtR) regulatory genes.</title>
        <authorList>
            <person name="Matsui H."/>
            <person name="Sano Y."/>
            <person name="Ishihara H."/>
            <person name="Shinomiya T."/>
        </authorList>
    </citation>
    <scope>NUCLEOTIDE SEQUENCE [GENOMIC DNA] OF 207-492</scope>
</reference>
<reference key="5">
    <citation type="journal article" date="1990" name="J. Bacteriol.">
        <title>Identification and characterization of genes for a second anthranilate synthase in Pseudomonas aeruginosa: interchangeability of the two anthranilate synthases and evolutionary implications.</title>
        <authorList>
            <person name="Essar D.W."/>
            <person name="Eberly L."/>
            <person name="Hadero A."/>
            <person name="Crawford I.P."/>
        </authorList>
    </citation>
    <scope>DISRUPTION PHENOTYPE</scope>
    <source>
        <strain>ATCC 15692 / DSM 22644 / CIP 104116 / JCM 14847 / LMG 12228 / 1C / PRS 101 / PAO1</strain>
        <strain>PAC174</strain>
    </source>
</reference>
<reference key="6">
    <citation type="journal article" date="2013" name="Microbiology">
        <title>The role of two Pseudomonas aeruginosa anthranilate synthases in tryptophan and quorum signal production.</title>
        <authorList>
            <person name="Palmer G.C."/>
            <person name="Jorth P.A."/>
            <person name="Whiteley M."/>
        </authorList>
    </citation>
    <scope>FUNCTION IN TRYPTOPHAN BIOSYNTHESIS</scope>
    <scope>PATHWAY</scope>
    <scope>INDUCTION</scope>
    <scope>DISRUPTION PHENOTYPE</scope>
    <source>
        <strain>UCBPP-PA14</strain>
    </source>
</reference>
<comment type="function">
    <text evidence="2 3 5">Part of a heterotetrameric complex that catalyzes the two-step biosynthesis of anthranilate, an intermediate in the biosynthesis of L-tryptophan (PubMed:2105306, PubMed:23449919). In the first step, the glutamine-binding beta subunit (TrpG) of anthranilate synthase (AS) provides the glutamine amidotransferase activity which generates ammonia as a substrate that, along with chorismate, is used in the second step, catalyzed by the large alpha subunit of AS (TrpE) to produce anthranilate. In the absence of TrpG, TrpE can synthesize anthranilate directly from chorismate and high concentrations of ammonia (By similarity).</text>
</comment>
<comment type="catalytic activity">
    <reaction>
        <text>chorismate + L-glutamine = anthranilate + pyruvate + L-glutamate + H(+)</text>
        <dbReference type="Rhea" id="RHEA:21732"/>
        <dbReference type="ChEBI" id="CHEBI:15361"/>
        <dbReference type="ChEBI" id="CHEBI:15378"/>
        <dbReference type="ChEBI" id="CHEBI:16567"/>
        <dbReference type="ChEBI" id="CHEBI:29748"/>
        <dbReference type="ChEBI" id="CHEBI:29985"/>
        <dbReference type="ChEBI" id="CHEBI:58359"/>
        <dbReference type="EC" id="4.1.3.27"/>
    </reaction>
</comment>
<comment type="cofactor">
    <cofactor evidence="2">
        <name>Mg(2+)</name>
        <dbReference type="ChEBI" id="CHEBI:18420"/>
    </cofactor>
    <text evidence="2">Binds 1 Mg(2+) ion per subunit.</text>
</comment>
<comment type="activity regulation">
    <text evidence="1">Feedback inhibited by tryptophan.</text>
</comment>
<comment type="pathway">
    <text evidence="5 8">Amino-acid biosynthesis; L-tryptophan biosynthesis; L-tryptophan from chorismate: step 1/5.</text>
</comment>
<comment type="subunit">
    <text evidence="2">Heterotetramer consisting of two non-identical subunits: a beta subunit (TrpG) and a large alpha subunit (TrpE).</text>
</comment>
<comment type="induction">
    <text evidence="5">Expression decreases as cell grow from early to late logphase and further decreases in stationary phase.</text>
</comment>
<comment type="disruption phenotype">
    <text evidence="3 4 5">Cells lacking this gene do not grow without tryptophan (auxotrophs) (PubMed:2105306, PubMed:23449919). About 10% decrease in pyocyanine production; double trpE-phnA disruption requires anthranilate or L-tryptophan for growth on minimal medium and does not make pyocyanine (PubMed:2153661).</text>
</comment>
<comment type="similarity">
    <text evidence="7">Belongs to the anthranilate synthase component I family.</text>
</comment>
<dbReference type="EC" id="4.1.3.27"/>
<dbReference type="EMBL" id="M33814">
    <property type="status" value="NOT_ANNOTATED_CDS"/>
    <property type="molecule type" value="Genomic_DNA"/>
</dbReference>
<dbReference type="EMBL" id="AB030825">
    <property type="protein sequence ID" value="BAA83144.1"/>
    <property type="molecule type" value="Genomic_DNA"/>
</dbReference>
<dbReference type="EMBL" id="AE004091">
    <property type="protein sequence ID" value="AAG03998.1"/>
    <property type="molecule type" value="Genomic_DNA"/>
</dbReference>
<dbReference type="EMBL" id="D12706">
    <property type="protein sequence ID" value="BAA02200.1"/>
    <property type="molecule type" value="Genomic_DNA"/>
</dbReference>
<dbReference type="PIR" id="D35114">
    <property type="entry name" value="D35114"/>
</dbReference>
<dbReference type="RefSeq" id="NP_249300.1">
    <property type="nucleotide sequence ID" value="NC_002516.2"/>
</dbReference>
<dbReference type="RefSeq" id="WP_003113204.1">
    <property type="nucleotide sequence ID" value="NC_002516.2"/>
</dbReference>
<dbReference type="SMR" id="P20580"/>
<dbReference type="STRING" id="208964.PA0609"/>
<dbReference type="PaxDb" id="208964-PA0609"/>
<dbReference type="DNASU" id="879191"/>
<dbReference type="GeneID" id="879191"/>
<dbReference type="KEGG" id="pae:PA0609"/>
<dbReference type="PATRIC" id="fig|208964.12.peg.645"/>
<dbReference type="PseudoCAP" id="PA0609"/>
<dbReference type="HOGENOM" id="CLU_006493_9_3_6"/>
<dbReference type="InParanoid" id="P20580"/>
<dbReference type="OrthoDB" id="9803598at2"/>
<dbReference type="PhylomeDB" id="P20580"/>
<dbReference type="BioCyc" id="MetaCyc:MONOMER-16005"/>
<dbReference type="BioCyc" id="PAER208964:G1FZ6-616-MONOMER"/>
<dbReference type="BRENDA" id="4.1.3.27">
    <property type="organism ID" value="5087"/>
</dbReference>
<dbReference type="UniPathway" id="UPA00035">
    <property type="reaction ID" value="UER00040"/>
</dbReference>
<dbReference type="Proteomes" id="UP000002438">
    <property type="component" value="Chromosome"/>
</dbReference>
<dbReference type="GO" id="GO:0004049">
    <property type="term" value="F:anthranilate synthase activity"/>
    <property type="evidence" value="ECO:0000315"/>
    <property type="project" value="PseudoCAP"/>
</dbReference>
<dbReference type="GO" id="GO:0046872">
    <property type="term" value="F:metal ion binding"/>
    <property type="evidence" value="ECO:0007669"/>
    <property type="project" value="UniProtKB-KW"/>
</dbReference>
<dbReference type="GO" id="GO:0000162">
    <property type="term" value="P:L-tryptophan biosynthetic process"/>
    <property type="evidence" value="ECO:0000315"/>
    <property type="project" value="PseudoCAP"/>
</dbReference>
<dbReference type="Gene3D" id="3.60.120.10">
    <property type="entry name" value="Anthranilate synthase"/>
    <property type="match status" value="1"/>
</dbReference>
<dbReference type="InterPro" id="IPR005801">
    <property type="entry name" value="ADC_synthase"/>
</dbReference>
<dbReference type="InterPro" id="IPR019999">
    <property type="entry name" value="Anth_synth_I-like"/>
</dbReference>
<dbReference type="InterPro" id="IPR006805">
    <property type="entry name" value="Anth_synth_I_N"/>
</dbReference>
<dbReference type="InterPro" id="IPR005256">
    <property type="entry name" value="Anth_synth_I_PabB"/>
</dbReference>
<dbReference type="InterPro" id="IPR015890">
    <property type="entry name" value="Chorismate_C"/>
</dbReference>
<dbReference type="NCBIfam" id="TIGR00564">
    <property type="entry name" value="trpE_most"/>
    <property type="match status" value="1"/>
</dbReference>
<dbReference type="PANTHER" id="PTHR11236">
    <property type="entry name" value="AMINOBENZOATE/ANTHRANILATE SYNTHASE"/>
    <property type="match status" value="1"/>
</dbReference>
<dbReference type="PANTHER" id="PTHR11236:SF48">
    <property type="entry name" value="ISOCHORISMATE SYNTHASE MENF"/>
    <property type="match status" value="1"/>
</dbReference>
<dbReference type="Pfam" id="PF04715">
    <property type="entry name" value="Anth_synt_I_N"/>
    <property type="match status" value="1"/>
</dbReference>
<dbReference type="Pfam" id="PF00425">
    <property type="entry name" value="Chorismate_bind"/>
    <property type="match status" value="1"/>
</dbReference>
<dbReference type="PRINTS" id="PR00095">
    <property type="entry name" value="ANTSNTHASEI"/>
</dbReference>
<dbReference type="SUPFAM" id="SSF56322">
    <property type="entry name" value="ADC synthase"/>
    <property type="match status" value="1"/>
</dbReference>
<feature type="chain" id="PRO_0000154106" description="Anthranilate synthase component 1">
    <location>
        <begin position="1"/>
        <end position="492"/>
    </location>
</feature>
<feature type="binding site" evidence="2">
    <location>
        <position position="48"/>
    </location>
    <ligand>
        <name>L-tryptophan</name>
        <dbReference type="ChEBI" id="CHEBI:57912"/>
    </ligand>
</feature>
<feature type="binding site" evidence="2">
    <location>
        <begin position="273"/>
        <end position="275"/>
    </location>
    <ligand>
        <name>L-tryptophan</name>
        <dbReference type="ChEBI" id="CHEBI:57912"/>
    </ligand>
</feature>
<feature type="binding site" evidence="2">
    <location>
        <begin position="308"/>
        <end position="309"/>
    </location>
    <ligand>
        <name>chorismate</name>
        <dbReference type="ChEBI" id="CHEBI:29748"/>
    </ligand>
</feature>
<feature type="binding site" evidence="2">
    <location>
        <position position="335"/>
    </location>
    <ligand>
        <name>Mg(2+)</name>
        <dbReference type="ChEBI" id="CHEBI:18420"/>
    </ligand>
</feature>
<feature type="binding site" evidence="2">
    <location>
        <position position="423"/>
    </location>
    <ligand>
        <name>chorismate</name>
        <dbReference type="ChEBI" id="CHEBI:29748"/>
    </ligand>
</feature>
<feature type="binding site" evidence="2">
    <location>
        <position position="443"/>
    </location>
    <ligand>
        <name>chorismate</name>
        <dbReference type="ChEBI" id="CHEBI:29748"/>
    </ligand>
</feature>
<feature type="binding site" evidence="2">
    <location>
        <begin position="457"/>
        <end position="459"/>
    </location>
    <ligand>
        <name>chorismate</name>
        <dbReference type="ChEBI" id="CHEBI:29748"/>
    </ligand>
</feature>
<feature type="binding site" evidence="2">
    <location>
        <position position="459"/>
    </location>
    <ligand>
        <name>chorismate</name>
        <dbReference type="ChEBI" id="CHEBI:29748"/>
    </ligand>
</feature>
<feature type="binding site" evidence="2">
    <location>
        <position position="472"/>
    </location>
    <ligand>
        <name>Mg(2+)</name>
        <dbReference type="ChEBI" id="CHEBI:18420"/>
    </ligand>
</feature>
<gene>
    <name evidence="6" type="primary">trpE</name>
    <name type="ordered locus">PA0609</name>
</gene>